<dbReference type="EC" id="6.3.2.-" evidence="1"/>
<dbReference type="EMBL" id="CR628337">
    <property type="protein sequence ID" value="CAH14687.1"/>
    <property type="molecule type" value="Genomic_DNA"/>
</dbReference>
<dbReference type="RefSeq" id="WP_010946163.1">
    <property type="nucleotide sequence ID" value="NC_006369.1"/>
</dbReference>
<dbReference type="SMR" id="Q5WZC5"/>
<dbReference type="GeneID" id="57034418"/>
<dbReference type="KEGG" id="lpf:lpl0457"/>
<dbReference type="LegioList" id="lpl0457"/>
<dbReference type="HOGENOM" id="CLU_054353_0_1_6"/>
<dbReference type="Proteomes" id="UP000002517">
    <property type="component" value="Chromosome"/>
</dbReference>
<dbReference type="GO" id="GO:0005737">
    <property type="term" value="C:cytoplasm"/>
    <property type="evidence" value="ECO:0007669"/>
    <property type="project" value="TreeGrafter"/>
</dbReference>
<dbReference type="GO" id="GO:0005524">
    <property type="term" value="F:ATP binding"/>
    <property type="evidence" value="ECO:0007669"/>
    <property type="project" value="UniProtKB-UniRule"/>
</dbReference>
<dbReference type="GO" id="GO:0046872">
    <property type="term" value="F:metal ion binding"/>
    <property type="evidence" value="ECO:0007669"/>
    <property type="project" value="UniProtKB-KW"/>
</dbReference>
<dbReference type="GO" id="GO:0018169">
    <property type="term" value="F:ribosomal S6-glutamic acid ligase activity"/>
    <property type="evidence" value="ECO:0007669"/>
    <property type="project" value="TreeGrafter"/>
</dbReference>
<dbReference type="GO" id="GO:0036211">
    <property type="term" value="P:protein modification process"/>
    <property type="evidence" value="ECO:0007669"/>
    <property type="project" value="InterPro"/>
</dbReference>
<dbReference type="GO" id="GO:0009432">
    <property type="term" value="P:SOS response"/>
    <property type="evidence" value="ECO:0007669"/>
    <property type="project" value="TreeGrafter"/>
</dbReference>
<dbReference type="GO" id="GO:0006412">
    <property type="term" value="P:translation"/>
    <property type="evidence" value="ECO:0007669"/>
    <property type="project" value="UniProtKB-KW"/>
</dbReference>
<dbReference type="FunFam" id="3.30.470.20:FF:000058">
    <property type="entry name" value="Alpha-aminoadipate--LysW ligase LysX protein"/>
    <property type="match status" value="1"/>
</dbReference>
<dbReference type="FunFam" id="3.30.1490.20:FF:000005">
    <property type="entry name" value="Probable alpha-L-glutamate ligase 1"/>
    <property type="match status" value="1"/>
</dbReference>
<dbReference type="Gene3D" id="3.40.50.20">
    <property type="match status" value="1"/>
</dbReference>
<dbReference type="Gene3D" id="3.30.1490.20">
    <property type="entry name" value="ATP-grasp fold, A domain"/>
    <property type="match status" value="1"/>
</dbReference>
<dbReference type="Gene3D" id="3.30.470.20">
    <property type="entry name" value="ATP-grasp fold, B domain"/>
    <property type="match status" value="1"/>
</dbReference>
<dbReference type="HAMAP" id="MF_01552">
    <property type="entry name" value="RimK"/>
    <property type="match status" value="1"/>
</dbReference>
<dbReference type="InterPro" id="IPR011761">
    <property type="entry name" value="ATP-grasp"/>
</dbReference>
<dbReference type="InterPro" id="IPR013651">
    <property type="entry name" value="ATP-grasp_RimK-type"/>
</dbReference>
<dbReference type="InterPro" id="IPR013815">
    <property type="entry name" value="ATP_grasp_subdomain_1"/>
</dbReference>
<dbReference type="InterPro" id="IPR023533">
    <property type="entry name" value="RimK"/>
</dbReference>
<dbReference type="InterPro" id="IPR041107">
    <property type="entry name" value="Rimk_N"/>
</dbReference>
<dbReference type="InterPro" id="IPR004666">
    <property type="entry name" value="Rp_bS6_RimK/Lys_biosynth_LsyX"/>
</dbReference>
<dbReference type="NCBIfam" id="NF007764">
    <property type="entry name" value="PRK10446.1"/>
    <property type="match status" value="1"/>
</dbReference>
<dbReference type="NCBIfam" id="TIGR00768">
    <property type="entry name" value="rimK_fam"/>
    <property type="match status" value="1"/>
</dbReference>
<dbReference type="PANTHER" id="PTHR21621:SF7">
    <property type="entry name" value="RIBOSOMAL PROTEIN BS6--L-GLUTAMATE LIGASE"/>
    <property type="match status" value="1"/>
</dbReference>
<dbReference type="PANTHER" id="PTHR21621">
    <property type="entry name" value="RIBOSOMAL PROTEIN S6 MODIFICATION PROTEIN"/>
    <property type="match status" value="1"/>
</dbReference>
<dbReference type="Pfam" id="PF08443">
    <property type="entry name" value="RimK"/>
    <property type="match status" value="1"/>
</dbReference>
<dbReference type="Pfam" id="PF18030">
    <property type="entry name" value="Rimk_N"/>
    <property type="match status" value="1"/>
</dbReference>
<dbReference type="SUPFAM" id="SSF56059">
    <property type="entry name" value="Glutathione synthetase ATP-binding domain-like"/>
    <property type="match status" value="1"/>
</dbReference>
<dbReference type="PROSITE" id="PS50975">
    <property type="entry name" value="ATP_GRASP"/>
    <property type="match status" value="1"/>
</dbReference>
<accession>Q5WZC5</accession>
<comment type="cofactor">
    <cofactor evidence="1">
        <name>Mg(2+)</name>
        <dbReference type="ChEBI" id="CHEBI:18420"/>
    </cofactor>
    <cofactor evidence="1">
        <name>Mn(2+)</name>
        <dbReference type="ChEBI" id="CHEBI:29035"/>
    </cofactor>
    <text evidence="1">Binds 2 magnesium or manganese ions per subunit.</text>
</comment>
<comment type="similarity">
    <text evidence="1">Belongs to the RimK family.</text>
</comment>
<protein>
    <recommendedName>
        <fullName evidence="1">Probable alpha-L-glutamate ligase</fullName>
        <ecNumber evidence="1">6.3.2.-</ecNumber>
    </recommendedName>
</protein>
<organism>
    <name type="scientific">Legionella pneumophila (strain Lens)</name>
    <dbReference type="NCBI Taxonomy" id="297245"/>
    <lineage>
        <taxon>Bacteria</taxon>
        <taxon>Pseudomonadati</taxon>
        <taxon>Pseudomonadota</taxon>
        <taxon>Gammaproteobacteria</taxon>
        <taxon>Legionellales</taxon>
        <taxon>Legionellaceae</taxon>
        <taxon>Legionella</taxon>
    </lineage>
</organism>
<evidence type="ECO:0000255" key="1">
    <source>
        <dbReference type="HAMAP-Rule" id="MF_01552"/>
    </source>
</evidence>
<name>RIMK_LEGPL</name>
<reference key="1">
    <citation type="journal article" date="2004" name="Nat. Genet.">
        <title>Evidence in the Legionella pneumophila genome for exploitation of host cell functions and high genome plasticity.</title>
        <authorList>
            <person name="Cazalet C."/>
            <person name="Rusniok C."/>
            <person name="Brueggemann H."/>
            <person name="Zidane N."/>
            <person name="Magnier A."/>
            <person name="Ma L."/>
            <person name="Tichit M."/>
            <person name="Jarraud S."/>
            <person name="Bouchier C."/>
            <person name="Vandenesch F."/>
            <person name="Kunst F."/>
            <person name="Etienne J."/>
            <person name="Glaser P."/>
            <person name="Buchrieser C."/>
        </authorList>
    </citation>
    <scope>NUCLEOTIDE SEQUENCE [LARGE SCALE GENOMIC DNA]</scope>
    <source>
        <strain>Lens</strain>
    </source>
</reference>
<gene>
    <name evidence="1" type="primary">rimK</name>
    <name type="ordered locus">lpl0457</name>
</gene>
<sequence>MKIAILATNPHLYSHKRLKAEAEAAGHEVKIINPLYCYMNVAASNPKVHYRGGAPLPHFDAVIPRIGASITYYGTAVLRHMETMGMYTLNESIAISRSRDKFRSLQLLARKGIPMPLTSFAQSPDDTEDLIHMVGGAPLVIKLLEGTQGKGVILADSHQSAVSIINAFKEMHANILVQEFIEESRGTDIRCFVIGEKVVAAVKRQAKDGEFRANVHQGGKAVKVKLSPQERAIAVSAAKTMGLRVAGVDLIRSNHGPLVLEINSSPGLEGIEKATNINLAGKIIEYIEKKAKPISSNHRFHG</sequence>
<feature type="chain" id="PRO_0000205462" description="Probable alpha-L-glutamate ligase">
    <location>
        <begin position="1"/>
        <end position="302"/>
    </location>
</feature>
<feature type="domain" description="ATP-grasp" evidence="1">
    <location>
        <begin position="105"/>
        <end position="288"/>
    </location>
</feature>
<feature type="binding site" evidence="1">
    <location>
        <position position="142"/>
    </location>
    <ligand>
        <name>ATP</name>
        <dbReference type="ChEBI" id="CHEBI:30616"/>
    </ligand>
</feature>
<feature type="binding site" evidence="1">
    <location>
        <begin position="179"/>
        <end position="180"/>
    </location>
    <ligand>
        <name>ATP</name>
        <dbReference type="ChEBI" id="CHEBI:30616"/>
    </ligand>
</feature>
<feature type="binding site" evidence="1">
    <location>
        <position position="188"/>
    </location>
    <ligand>
        <name>ATP</name>
        <dbReference type="ChEBI" id="CHEBI:30616"/>
    </ligand>
</feature>
<feature type="binding site" evidence="1">
    <location>
        <begin position="212"/>
        <end position="214"/>
    </location>
    <ligand>
        <name>ATP</name>
        <dbReference type="ChEBI" id="CHEBI:30616"/>
    </ligand>
</feature>
<feature type="binding site" evidence="1">
    <location>
        <position position="249"/>
    </location>
    <ligand>
        <name>Mg(2+)</name>
        <dbReference type="ChEBI" id="CHEBI:18420"/>
        <label>1</label>
    </ligand>
</feature>
<feature type="binding site" evidence="1">
    <location>
        <position position="249"/>
    </location>
    <ligand>
        <name>Mn(2+)</name>
        <dbReference type="ChEBI" id="CHEBI:29035"/>
        <label>1</label>
    </ligand>
</feature>
<feature type="binding site" evidence="1">
    <location>
        <position position="261"/>
    </location>
    <ligand>
        <name>Mg(2+)</name>
        <dbReference type="ChEBI" id="CHEBI:18420"/>
        <label>1</label>
    </ligand>
</feature>
<feature type="binding site" evidence="1">
    <location>
        <position position="261"/>
    </location>
    <ligand>
        <name>Mg(2+)</name>
        <dbReference type="ChEBI" id="CHEBI:18420"/>
        <label>2</label>
    </ligand>
</feature>
<feature type="binding site" evidence="1">
    <location>
        <position position="261"/>
    </location>
    <ligand>
        <name>Mn(2+)</name>
        <dbReference type="ChEBI" id="CHEBI:29035"/>
        <label>1</label>
    </ligand>
</feature>
<feature type="binding site" evidence="1">
    <location>
        <position position="261"/>
    </location>
    <ligand>
        <name>Mn(2+)</name>
        <dbReference type="ChEBI" id="CHEBI:29035"/>
        <label>2</label>
    </ligand>
</feature>
<feature type="binding site" evidence="1">
    <location>
        <position position="263"/>
    </location>
    <ligand>
        <name>Mg(2+)</name>
        <dbReference type="ChEBI" id="CHEBI:18420"/>
        <label>2</label>
    </ligand>
</feature>
<feature type="binding site" evidence="1">
    <location>
        <position position="263"/>
    </location>
    <ligand>
        <name>Mn(2+)</name>
        <dbReference type="ChEBI" id="CHEBI:29035"/>
        <label>2</label>
    </ligand>
</feature>
<proteinExistence type="inferred from homology"/>
<keyword id="KW-0067">ATP-binding</keyword>
<keyword id="KW-0436">Ligase</keyword>
<keyword id="KW-0460">Magnesium</keyword>
<keyword id="KW-0464">Manganese</keyword>
<keyword id="KW-0479">Metal-binding</keyword>
<keyword id="KW-0547">Nucleotide-binding</keyword>
<keyword id="KW-0648">Protein biosynthesis</keyword>